<dbReference type="EMBL" id="CM003140">
    <property type="protein sequence ID" value="KIS71592.1"/>
    <property type="molecule type" value="Genomic_DNA"/>
</dbReference>
<dbReference type="RefSeq" id="XP_011386600.1">
    <property type="nucleotide sequence ID" value="XM_011388298.1"/>
</dbReference>
<dbReference type="SMR" id="Q4PIM8"/>
<dbReference type="FunCoup" id="Q4PIM8">
    <property type="interactions" value="312"/>
</dbReference>
<dbReference type="STRING" id="237631.Q4PIM8"/>
<dbReference type="EnsemblFungi" id="KIS71592">
    <property type="protein sequence ID" value="KIS71592"/>
    <property type="gene ID" value="UMAG_10010"/>
</dbReference>
<dbReference type="GeneID" id="23566086"/>
<dbReference type="KEGG" id="uma:UMAG_10010"/>
<dbReference type="VEuPathDB" id="FungiDB:UMAG_10010"/>
<dbReference type="eggNOG" id="KOG3326">
    <property type="taxonomic scope" value="Eukaryota"/>
</dbReference>
<dbReference type="HOGENOM" id="CLU_103054_0_0_1"/>
<dbReference type="InParanoid" id="Q4PIM8"/>
<dbReference type="OrthoDB" id="284292at2759"/>
<dbReference type="Proteomes" id="UP000000561">
    <property type="component" value="Chromosome 1"/>
</dbReference>
<dbReference type="GO" id="GO:0005759">
    <property type="term" value="C:mitochondrial matrix"/>
    <property type="evidence" value="ECO:0007669"/>
    <property type="project" value="UniProtKB-SubCell"/>
</dbReference>
<dbReference type="GO" id="GO:0005739">
    <property type="term" value="C:mitochondrion"/>
    <property type="evidence" value="ECO:0000318"/>
    <property type="project" value="GO_Central"/>
</dbReference>
<dbReference type="GO" id="GO:0006121">
    <property type="term" value="P:mitochondrial electron transport, succinate to ubiquinone"/>
    <property type="evidence" value="ECO:0000318"/>
    <property type="project" value="GO_Central"/>
</dbReference>
<dbReference type="GO" id="GO:0034553">
    <property type="term" value="P:mitochondrial respiratory chain complex II assembly"/>
    <property type="evidence" value="ECO:0000318"/>
    <property type="project" value="GO_Central"/>
</dbReference>
<dbReference type="GO" id="GO:0006099">
    <property type="term" value="P:tricarboxylic acid cycle"/>
    <property type="evidence" value="ECO:0000318"/>
    <property type="project" value="GO_Central"/>
</dbReference>
<dbReference type="FunFam" id="1.10.150.250:FF:000004">
    <property type="entry name" value="Succinate dehydrogenase assembly factor 2, mitochondrial"/>
    <property type="match status" value="1"/>
</dbReference>
<dbReference type="Gene3D" id="1.10.150.250">
    <property type="entry name" value="Flavinator of succinate dehydrogenase"/>
    <property type="match status" value="1"/>
</dbReference>
<dbReference type="HAMAP" id="MF_03057">
    <property type="entry name" value="SDHAF2"/>
    <property type="match status" value="1"/>
</dbReference>
<dbReference type="InterPro" id="IPR005631">
    <property type="entry name" value="SDH"/>
</dbReference>
<dbReference type="InterPro" id="IPR036714">
    <property type="entry name" value="SDH_sf"/>
</dbReference>
<dbReference type="InterPro" id="IPR028882">
    <property type="entry name" value="SDHAF2"/>
</dbReference>
<dbReference type="PANTHER" id="PTHR12469">
    <property type="entry name" value="PROTEIN EMI5 HOMOLOG, MITOCHONDRIAL"/>
    <property type="match status" value="1"/>
</dbReference>
<dbReference type="PANTHER" id="PTHR12469:SF2">
    <property type="entry name" value="SUCCINATE DEHYDROGENASE ASSEMBLY FACTOR 2, MITOCHONDRIAL"/>
    <property type="match status" value="1"/>
</dbReference>
<dbReference type="Pfam" id="PF03937">
    <property type="entry name" value="Sdh5"/>
    <property type="match status" value="1"/>
</dbReference>
<dbReference type="SUPFAM" id="SSF109910">
    <property type="entry name" value="YgfY-like"/>
    <property type="match status" value="1"/>
</dbReference>
<feature type="chain" id="PRO_0000424065" description="Succinate dehydrogenase assembly factor 2, mitochondrial">
    <location>
        <begin position="1"/>
        <end position="238"/>
    </location>
</feature>
<feature type="region of interest" description="Disordered" evidence="2">
    <location>
        <begin position="47"/>
        <end position="82"/>
    </location>
</feature>
<feature type="compositionally biased region" description="Basic and acidic residues" evidence="2">
    <location>
        <begin position="68"/>
        <end position="80"/>
    </location>
</feature>
<gene>
    <name type="ORF">UMAG_10010</name>
</gene>
<reference key="1">
    <citation type="journal article" date="2006" name="Nature">
        <title>Insights from the genome of the biotrophic fungal plant pathogen Ustilago maydis.</title>
        <authorList>
            <person name="Kaemper J."/>
            <person name="Kahmann R."/>
            <person name="Boelker M."/>
            <person name="Ma L.-J."/>
            <person name="Brefort T."/>
            <person name="Saville B.J."/>
            <person name="Banuett F."/>
            <person name="Kronstad J.W."/>
            <person name="Gold S.E."/>
            <person name="Mueller O."/>
            <person name="Perlin M.H."/>
            <person name="Woesten H.A.B."/>
            <person name="de Vries R."/>
            <person name="Ruiz-Herrera J."/>
            <person name="Reynaga-Pena C.G."/>
            <person name="Snetselaar K."/>
            <person name="McCann M."/>
            <person name="Perez-Martin J."/>
            <person name="Feldbruegge M."/>
            <person name="Basse C.W."/>
            <person name="Steinberg G."/>
            <person name="Ibeas J.I."/>
            <person name="Holloman W."/>
            <person name="Guzman P."/>
            <person name="Farman M.L."/>
            <person name="Stajich J.E."/>
            <person name="Sentandreu R."/>
            <person name="Gonzalez-Prieto J.M."/>
            <person name="Kennell J.C."/>
            <person name="Molina L."/>
            <person name="Schirawski J."/>
            <person name="Mendoza-Mendoza A."/>
            <person name="Greilinger D."/>
            <person name="Muench K."/>
            <person name="Roessel N."/>
            <person name="Scherer M."/>
            <person name="Vranes M."/>
            <person name="Ladendorf O."/>
            <person name="Vincon V."/>
            <person name="Fuchs U."/>
            <person name="Sandrock B."/>
            <person name="Meng S."/>
            <person name="Ho E.C.H."/>
            <person name="Cahill M.J."/>
            <person name="Boyce K.J."/>
            <person name="Klose J."/>
            <person name="Klosterman S.J."/>
            <person name="Deelstra H.J."/>
            <person name="Ortiz-Castellanos L."/>
            <person name="Li W."/>
            <person name="Sanchez-Alonso P."/>
            <person name="Schreier P.H."/>
            <person name="Haeuser-Hahn I."/>
            <person name="Vaupel M."/>
            <person name="Koopmann E."/>
            <person name="Friedrich G."/>
            <person name="Voss H."/>
            <person name="Schlueter T."/>
            <person name="Margolis J."/>
            <person name="Platt D."/>
            <person name="Swimmer C."/>
            <person name="Gnirke A."/>
            <person name="Chen F."/>
            <person name="Vysotskaia V."/>
            <person name="Mannhaupt G."/>
            <person name="Gueldener U."/>
            <person name="Muensterkoetter M."/>
            <person name="Haase D."/>
            <person name="Oesterheld M."/>
            <person name="Mewes H.-W."/>
            <person name="Mauceli E.W."/>
            <person name="DeCaprio D."/>
            <person name="Wade C.M."/>
            <person name="Butler J."/>
            <person name="Young S.K."/>
            <person name="Jaffe D.B."/>
            <person name="Calvo S.E."/>
            <person name="Nusbaum C."/>
            <person name="Galagan J.E."/>
            <person name="Birren B.W."/>
        </authorList>
    </citation>
    <scope>NUCLEOTIDE SEQUENCE [LARGE SCALE GENOMIC DNA]</scope>
    <source>
        <strain>DSM 14603 / FGSC 9021 / UM521</strain>
    </source>
</reference>
<reference key="2">
    <citation type="submission" date="2014-09" db="EMBL/GenBank/DDBJ databases">
        <authorList>
            <person name="Gueldener U."/>
            <person name="Muensterkoetter M."/>
            <person name="Walter M.C."/>
            <person name="Mannhaupt G."/>
            <person name="Kahmann R."/>
        </authorList>
    </citation>
    <scope>GENOME REANNOTATION</scope>
    <source>
        <strain>DSM 14603 / FGSC 9021 / UM521</strain>
    </source>
</reference>
<sequence length="238" mass="26789">MTIRNVTRGLRCTLAFRTLPNALPVQASLCRVDCALLSTTCARRKSGLKADGSRADQAEAGASQSLDKQSRTLDSVRDDTLSDPYPLPFSPDIVELNSVKTRVEAGLESKWSGVNLASSQQTLNHIDAPMRVPGRDSEARETKIARLIYQTRKRGTLETDLLLSTFAKKELKNLPDAELDEFDRLLDEPDWDIFYWCTQRKPIPARWAHSFNTAGKLGHRLVAHTRNDEKAVRWMPEL</sequence>
<keyword id="KW-0143">Chaperone</keyword>
<keyword id="KW-0496">Mitochondrion</keyword>
<keyword id="KW-1185">Reference proteome</keyword>
<accession>Q4PIM8</accession>
<accession>A0A0D1CF13</accession>
<organism>
    <name type="scientific">Mycosarcoma maydis</name>
    <name type="common">Corn smut fungus</name>
    <name type="synonym">Ustilago maydis</name>
    <dbReference type="NCBI Taxonomy" id="5270"/>
    <lineage>
        <taxon>Eukaryota</taxon>
        <taxon>Fungi</taxon>
        <taxon>Dikarya</taxon>
        <taxon>Basidiomycota</taxon>
        <taxon>Ustilaginomycotina</taxon>
        <taxon>Ustilaginomycetes</taxon>
        <taxon>Ustilaginales</taxon>
        <taxon>Ustilaginaceae</taxon>
        <taxon>Mycosarcoma</taxon>
    </lineage>
</organism>
<name>SDHF2_MYCMD</name>
<proteinExistence type="inferred from homology"/>
<evidence type="ECO:0000255" key="1">
    <source>
        <dbReference type="HAMAP-Rule" id="MF_03057"/>
    </source>
</evidence>
<evidence type="ECO:0000256" key="2">
    <source>
        <dbReference type="SAM" id="MobiDB-lite"/>
    </source>
</evidence>
<comment type="function">
    <text evidence="1">Plays an essential role in the assembly of succinate dehydrogenase (SDH), an enzyme complex (also referred to as respiratory complex II) that is a component of both the tricarboxylic acid (TCA) cycle and the mitochondrial electron transport chain, and which couples the oxidation of succinate to fumarate with the reduction of ubiquinone (coenzyme Q) to ubiquinol. Required for flavinylation (covalent attachment of FAD) of the flavoprotein subunit of the SDH catalytic dimer.</text>
</comment>
<comment type="subunit">
    <text evidence="1">Interacts with the flavoprotein subunit within the SDH catalytic dimer.</text>
</comment>
<comment type="subcellular location">
    <subcellularLocation>
        <location evidence="1">Mitochondrion matrix</location>
    </subcellularLocation>
</comment>
<comment type="miscellaneous">
    <text evidence="1">This protein may be expected to contain an N-terminal transit peptide but none has been predicted.</text>
</comment>
<comment type="similarity">
    <text evidence="1">Belongs to the SDHAF2 family.</text>
</comment>
<protein>
    <recommendedName>
        <fullName evidence="1">Succinate dehydrogenase assembly factor 2, mitochondrial</fullName>
        <shortName evidence="1">SDH assembly factor 2</shortName>
        <shortName evidence="1">SDHAF2</shortName>
    </recommendedName>
</protein>